<reference key="1">
    <citation type="journal article" date="2011" name="J. Bacteriol.">
        <title>Comparative genomics of 28 Salmonella enterica isolates: evidence for CRISPR-mediated adaptive sublineage evolution.</title>
        <authorList>
            <person name="Fricke W.F."/>
            <person name="Mammel M.K."/>
            <person name="McDermott P.F."/>
            <person name="Tartera C."/>
            <person name="White D.G."/>
            <person name="Leclerc J.E."/>
            <person name="Ravel J."/>
            <person name="Cebula T.A."/>
        </authorList>
    </citation>
    <scope>NUCLEOTIDE SEQUENCE [LARGE SCALE GENOMIC DNA]</scope>
    <source>
        <strain>SL254</strain>
    </source>
</reference>
<keyword id="KW-0998">Cell outer membrane</keyword>
<keyword id="KW-0406">Ion transport</keyword>
<keyword id="KW-0472">Membrane</keyword>
<keyword id="KW-0626">Porin</keyword>
<keyword id="KW-0732">Signal</keyword>
<keyword id="KW-0762">Sugar transport</keyword>
<keyword id="KW-0812">Transmembrane</keyword>
<keyword id="KW-1134">Transmembrane beta strand</keyword>
<keyword id="KW-0813">Transport</keyword>
<sequence>MMITLRKLPLAVAVAAGVMSAQAMAVDFHGYARSGIGWTGSGGEQQCFQVTGAQSKYRLGNECETYAELKLGQEVWKEGDKSFYFDTNVAYSVNQQNDWESTDPAFREANVQGKNLIEWLPGSTIWAGKRFYQRHDVHMIDFYYWDISGPGAGIENIDLGFGKLSLAATRSTEAGGSYTFSSQNIYDEVKDTANDVFDVRLAGLQTNPDGVLELGVDYGRANTTDGYKLADGASKDGWMFTAEHTQSMLKGYNKFVVQYATDAMTTQGKGQARGSDGSSSFTEELPDGTKINYANKVINNNGDMWRILDHGAISLGDKWDLMYVGMYQNIDWDNNLGTEWWTVGVRPMYKWTPIMSTLLEVGYDNVKSQQTGDRNNQYKITLAQQWQAGDSIWSRPAIRIFATYAKWDEKWGYIKDGDNISRYAAATNSGISTNSRGDSDEWTFGAQMEIWW</sequence>
<organism>
    <name type="scientific">Salmonella newport (strain SL254)</name>
    <dbReference type="NCBI Taxonomy" id="423368"/>
    <lineage>
        <taxon>Bacteria</taxon>
        <taxon>Pseudomonadati</taxon>
        <taxon>Pseudomonadota</taxon>
        <taxon>Gammaproteobacteria</taxon>
        <taxon>Enterobacterales</taxon>
        <taxon>Enterobacteriaceae</taxon>
        <taxon>Salmonella</taxon>
    </lineage>
</organism>
<feature type="signal peptide" evidence="1">
    <location>
        <begin position="1"/>
        <end position="25"/>
    </location>
</feature>
<feature type="chain" id="PRO_1000140492" description="Maltoporin">
    <location>
        <begin position="26"/>
        <end position="452"/>
    </location>
</feature>
<feature type="site" description="Greasy slide, important in sugar transport" evidence="1">
    <location>
        <position position="31"/>
    </location>
</feature>
<feature type="site" description="Greasy slide, important in sugar transport" evidence="1">
    <location>
        <position position="66"/>
    </location>
</feature>
<feature type="site" description="Greasy slide, important in sugar transport" evidence="1">
    <location>
        <position position="99"/>
    </location>
</feature>
<feature type="site" description="Important in sugar transport" evidence="1">
    <location>
        <position position="143"/>
    </location>
</feature>
<feature type="site" description="Greasy slide, important in sugar transport" evidence="1">
    <location>
        <position position="252"/>
    </location>
</feature>
<feature type="site" description="Greasy slide, important in sugar transport" evidence="1">
    <location>
        <position position="393"/>
    </location>
</feature>
<feature type="site" description="Greasy slide, important in sugar transport" evidence="1">
    <location>
        <position position="451"/>
    </location>
</feature>
<comment type="function">
    <text evidence="1">Involved in the transport of maltose and maltodextrins.</text>
</comment>
<comment type="catalytic activity">
    <reaction evidence="1">
        <text>beta-maltose(in) = beta-maltose(out)</text>
        <dbReference type="Rhea" id="RHEA:29731"/>
        <dbReference type="ChEBI" id="CHEBI:18147"/>
    </reaction>
</comment>
<comment type="subunit">
    <text evidence="1">Homotrimer formed of three 18-stranded antiparallel beta-barrels, containing three independent channels.</text>
</comment>
<comment type="subcellular location">
    <subcellularLocation>
        <location evidence="1">Cell outer membrane</location>
        <topology evidence="1">Multi-pass membrane protein</topology>
    </subcellularLocation>
</comment>
<comment type="induction">
    <text evidence="1">By maltose.</text>
</comment>
<comment type="similarity">
    <text evidence="1">Belongs to the porin LamB (TC 1.B.3) family.</text>
</comment>
<dbReference type="EMBL" id="CP001113">
    <property type="protein sequence ID" value="ACF64106.1"/>
    <property type="molecule type" value="Genomic_DNA"/>
</dbReference>
<dbReference type="RefSeq" id="WP_000973678.1">
    <property type="nucleotide sequence ID" value="NZ_CCMR01000003.1"/>
</dbReference>
<dbReference type="SMR" id="B4T1S6"/>
<dbReference type="KEGG" id="see:SNSL254_A4574"/>
<dbReference type="HOGENOM" id="CLU_032473_4_1_6"/>
<dbReference type="Proteomes" id="UP000008824">
    <property type="component" value="Chromosome"/>
</dbReference>
<dbReference type="GO" id="GO:0009279">
    <property type="term" value="C:cell outer membrane"/>
    <property type="evidence" value="ECO:0007669"/>
    <property type="project" value="UniProtKB-SubCell"/>
</dbReference>
<dbReference type="GO" id="GO:0046930">
    <property type="term" value="C:pore complex"/>
    <property type="evidence" value="ECO:0007669"/>
    <property type="project" value="UniProtKB-KW"/>
</dbReference>
<dbReference type="GO" id="GO:0042958">
    <property type="term" value="F:maltodextrin transmembrane transporter activity"/>
    <property type="evidence" value="ECO:0007669"/>
    <property type="project" value="InterPro"/>
</dbReference>
<dbReference type="GO" id="GO:0015481">
    <property type="term" value="F:maltose transporting porin activity"/>
    <property type="evidence" value="ECO:0007669"/>
    <property type="project" value="InterPro"/>
</dbReference>
<dbReference type="GO" id="GO:0006811">
    <property type="term" value="P:monoatomic ion transport"/>
    <property type="evidence" value="ECO:0007669"/>
    <property type="project" value="UniProtKB-KW"/>
</dbReference>
<dbReference type="CDD" id="cd01346">
    <property type="entry name" value="Maltoporin-like"/>
    <property type="match status" value="1"/>
</dbReference>
<dbReference type="FunFam" id="2.40.170.10:FF:000001">
    <property type="entry name" value="Maltoporin"/>
    <property type="match status" value="1"/>
</dbReference>
<dbReference type="Gene3D" id="2.40.170.10">
    <property type="entry name" value="Porin, LamB type"/>
    <property type="match status" value="1"/>
</dbReference>
<dbReference type="HAMAP" id="MF_01301">
    <property type="entry name" value="LamB"/>
    <property type="match status" value="1"/>
</dbReference>
<dbReference type="InterPro" id="IPR050286">
    <property type="entry name" value="G_neg_Bact_CarbUptk_Porin"/>
</dbReference>
<dbReference type="InterPro" id="IPR023738">
    <property type="entry name" value="Maltoporin"/>
</dbReference>
<dbReference type="InterPro" id="IPR003192">
    <property type="entry name" value="Porin_LamB"/>
</dbReference>
<dbReference type="InterPro" id="IPR036998">
    <property type="entry name" value="Porin_LamB_sf"/>
</dbReference>
<dbReference type="NCBIfam" id="NF006860">
    <property type="entry name" value="PRK09360.1"/>
    <property type="match status" value="1"/>
</dbReference>
<dbReference type="PANTHER" id="PTHR38762">
    <property type="entry name" value="CRYPTIC OUTER MEMBRANE PORIN BGLH-RELATED"/>
    <property type="match status" value="1"/>
</dbReference>
<dbReference type="PANTHER" id="PTHR38762:SF1">
    <property type="entry name" value="CRYPTIC OUTER MEMBRANE PORIN BGLH-RELATED"/>
    <property type="match status" value="1"/>
</dbReference>
<dbReference type="Pfam" id="PF02264">
    <property type="entry name" value="LamB"/>
    <property type="match status" value="1"/>
</dbReference>
<dbReference type="SUPFAM" id="SSF56935">
    <property type="entry name" value="Porins"/>
    <property type="match status" value="1"/>
</dbReference>
<protein>
    <recommendedName>
        <fullName evidence="1">Maltoporin</fullName>
    </recommendedName>
    <alternativeName>
        <fullName evidence="1">Maltose-inducible porin</fullName>
    </alternativeName>
</protein>
<gene>
    <name evidence="1" type="primary">lamB</name>
    <name type="ordered locus">SNSL254_A4574</name>
</gene>
<name>LAMB_SALNS</name>
<proteinExistence type="inferred from homology"/>
<accession>B4T1S6</accession>
<evidence type="ECO:0000255" key="1">
    <source>
        <dbReference type="HAMAP-Rule" id="MF_01301"/>
    </source>
</evidence>